<organism>
    <name type="scientific">Caenorhabditis elegans</name>
    <dbReference type="NCBI Taxonomy" id="6239"/>
    <lineage>
        <taxon>Eukaryota</taxon>
        <taxon>Metazoa</taxon>
        <taxon>Ecdysozoa</taxon>
        <taxon>Nematoda</taxon>
        <taxon>Chromadorea</taxon>
        <taxon>Rhabditida</taxon>
        <taxon>Rhabditina</taxon>
        <taxon>Rhabditomorpha</taxon>
        <taxon>Rhabditoidea</taxon>
        <taxon>Rhabditidae</taxon>
        <taxon>Peloderinae</taxon>
        <taxon>Caenorhabditis</taxon>
    </lineage>
</organism>
<protein>
    <recommendedName>
        <fullName>Probable insulin-like peptide alpha-type 3</fullName>
    </recommendedName>
</protein>
<keyword id="KW-1015">Disulfide bond</keyword>
<keyword id="KW-1185">Reference proteome</keyword>
<keyword id="KW-0964">Secreted</keyword>
<keyword id="KW-0732">Signal</keyword>
<reference key="1">
    <citation type="journal article" date="1998" name="Science">
        <title>Genome sequence of the nematode C. elegans: a platform for investigating biology.</title>
        <authorList>
            <consortium name="The C. elegans sequencing consortium"/>
        </authorList>
    </citation>
    <scope>NUCLEOTIDE SEQUENCE [LARGE SCALE GENOMIC DNA]</scope>
    <source>
        <strain>Bristol N2</strain>
    </source>
</reference>
<reference key="2">
    <citation type="journal article" date="1998" name="Genome Res.">
        <title>New insulin-like proteins with atypical disulfide bond pattern characterized in Caenorhabditis elegans by comparative sequence analysis and homology modeling.</title>
        <authorList>
            <person name="Duret L."/>
            <person name="Guex N."/>
            <person name="Peitsch M.C."/>
            <person name="Bairoch A."/>
        </authorList>
    </citation>
    <scope>SIMILARITY TO INSULIN</scope>
    <scope>3D-STRUCTURE MODELING</scope>
</reference>
<feature type="signal peptide" evidence="1">
    <location>
        <begin position="1"/>
        <end position="18"/>
    </location>
</feature>
<feature type="chain" id="PRO_0000016215" description="Probable insulin-like peptide alpha-type 3">
    <location>
        <begin position="19"/>
        <end position="76"/>
    </location>
</feature>
<feature type="disulfide bond" evidence="1">
    <location>
        <begin position="28"/>
        <end position="58"/>
    </location>
</feature>
<feature type="disulfide bond" evidence="1">
    <location>
        <begin position="40"/>
        <end position="71"/>
    </location>
</feature>
<feature type="disulfide bond" evidence="1">
    <location>
        <begin position="46"/>
        <end position="72"/>
    </location>
</feature>
<proteinExistence type="inferred from homology"/>
<gene>
    <name type="primary">ins-23</name>
    <name type="ORF">M04D8.3</name>
</gene>
<sequence>MFVLLIILSIILAQVTDAHSELHVRRVCGTAIIKNIMRLCPGVPACENGEVPSPTEYCSMGYSDSQVKYLCCPTSQ</sequence>
<name>ILA3_CAEEL</name>
<comment type="subcellular location">
    <subcellularLocation>
        <location evidence="2">Secreted</location>
    </subcellularLocation>
</comment>
<comment type="similarity">
    <text evidence="2">Belongs to the insulin family.</text>
</comment>
<accession>Q21506</accession>
<dbReference type="EMBL" id="Z32682">
    <property type="protein sequence ID" value="CAA83609.1"/>
    <property type="molecule type" value="Genomic_DNA"/>
</dbReference>
<dbReference type="PIR" id="S43590">
    <property type="entry name" value="S43590"/>
</dbReference>
<dbReference type="RefSeq" id="NP_499224.1">
    <property type="nucleotide sequence ID" value="NM_066823.2"/>
</dbReference>
<dbReference type="SMR" id="Q21506"/>
<dbReference type="FunCoup" id="Q21506">
    <property type="interactions" value="226"/>
</dbReference>
<dbReference type="STRING" id="6239.M04D8.3.1"/>
<dbReference type="PaxDb" id="6239-M04D8.3"/>
<dbReference type="EnsemblMetazoa" id="M04D8.3.1">
    <property type="protein sequence ID" value="M04D8.3.1"/>
    <property type="gene ID" value="WBGene00002106"/>
</dbReference>
<dbReference type="GeneID" id="191691"/>
<dbReference type="KEGG" id="cel:CELE_M04D8.3"/>
<dbReference type="UCSC" id="M04D8.3">
    <property type="organism name" value="c. elegans"/>
</dbReference>
<dbReference type="AGR" id="WB:WBGene00002106"/>
<dbReference type="CTD" id="191691"/>
<dbReference type="WormBase" id="M04D8.3">
    <property type="protein sequence ID" value="CE00578"/>
    <property type="gene ID" value="WBGene00002106"/>
    <property type="gene designation" value="ins-23"/>
</dbReference>
<dbReference type="eggNOG" id="ENOG502TISA">
    <property type="taxonomic scope" value="Eukaryota"/>
</dbReference>
<dbReference type="GeneTree" id="ENSGT00970000197132"/>
<dbReference type="HOGENOM" id="CLU_2673472_0_0_1"/>
<dbReference type="InParanoid" id="Q21506"/>
<dbReference type="OrthoDB" id="5837265at2759"/>
<dbReference type="PhylomeDB" id="Q21506"/>
<dbReference type="PRO" id="PR:Q21506"/>
<dbReference type="Proteomes" id="UP000001940">
    <property type="component" value="Chromosome III"/>
</dbReference>
<dbReference type="Bgee" id="WBGene00002106">
    <property type="expression patterns" value="Expressed in adult organism and 1 other cell type or tissue"/>
</dbReference>
<dbReference type="GO" id="GO:0005576">
    <property type="term" value="C:extracellular region"/>
    <property type="evidence" value="ECO:0007669"/>
    <property type="project" value="UniProtKB-SubCell"/>
</dbReference>
<dbReference type="GO" id="GO:0005179">
    <property type="term" value="F:hormone activity"/>
    <property type="evidence" value="ECO:0007669"/>
    <property type="project" value="InterPro"/>
</dbReference>
<dbReference type="Gene3D" id="1.10.100.10">
    <property type="entry name" value="Insulin-like"/>
    <property type="match status" value="1"/>
</dbReference>
<dbReference type="InterPro" id="IPR003235">
    <property type="entry name" value="Nem_insulin-like_b-type"/>
</dbReference>
<dbReference type="Pfam" id="PF03488">
    <property type="entry name" value="Ins_beta"/>
    <property type="match status" value="1"/>
</dbReference>
<evidence type="ECO:0000255" key="1"/>
<evidence type="ECO:0000305" key="2"/>